<dbReference type="EMBL" id="AE016815">
    <property type="protein sequence ID" value="AAS50901.2"/>
    <property type="molecule type" value="Genomic_DNA"/>
</dbReference>
<dbReference type="RefSeq" id="NP_983077.2">
    <property type="nucleotide sequence ID" value="NM_208430.2"/>
</dbReference>
<dbReference type="SMR" id="Q75D94"/>
<dbReference type="FunCoup" id="Q75D94">
    <property type="interactions" value="17"/>
</dbReference>
<dbReference type="STRING" id="284811.Q75D94"/>
<dbReference type="EnsemblFungi" id="AAS50901">
    <property type="protein sequence ID" value="AAS50901"/>
    <property type="gene ID" value="AGOS_ABR130W"/>
</dbReference>
<dbReference type="GeneID" id="4619185"/>
<dbReference type="KEGG" id="ago:AGOS_ABR130W"/>
<dbReference type="eggNOG" id="KOG4618">
    <property type="taxonomic scope" value="Eukaryota"/>
</dbReference>
<dbReference type="HOGENOM" id="CLU_153383_1_0_1"/>
<dbReference type="InParanoid" id="Q75D94"/>
<dbReference type="OMA" id="NPENHRH"/>
<dbReference type="OrthoDB" id="9971592at2759"/>
<dbReference type="Proteomes" id="UP000000591">
    <property type="component" value="Chromosome II"/>
</dbReference>
<dbReference type="GO" id="GO:0005758">
    <property type="term" value="C:mitochondrial intermembrane space"/>
    <property type="evidence" value="ECO:0007669"/>
    <property type="project" value="UniProtKB-SubCell"/>
</dbReference>
<dbReference type="GO" id="GO:0005739">
    <property type="term" value="C:mitochondrion"/>
    <property type="evidence" value="ECO:0000318"/>
    <property type="project" value="GO_Central"/>
</dbReference>
<dbReference type="GO" id="GO:0033617">
    <property type="term" value="P:mitochondrial cytochrome c oxidase assembly"/>
    <property type="evidence" value="ECO:0007669"/>
    <property type="project" value="EnsemblFungi"/>
</dbReference>
<dbReference type="GO" id="GO:0033108">
    <property type="term" value="P:mitochondrial respiratory chain complex assembly"/>
    <property type="evidence" value="ECO:0000318"/>
    <property type="project" value="GO_Central"/>
</dbReference>
<dbReference type="Gene3D" id="1.10.287.1130">
    <property type="entry name" value="CytochromE C oxidase copper chaperone"/>
    <property type="match status" value="1"/>
</dbReference>
<dbReference type="InterPro" id="IPR010625">
    <property type="entry name" value="CHCH"/>
</dbReference>
<dbReference type="InterPro" id="IPR051040">
    <property type="entry name" value="COX23"/>
</dbReference>
<dbReference type="InterPro" id="IPR009069">
    <property type="entry name" value="Cys_alpha_HP_mot_SF"/>
</dbReference>
<dbReference type="PANTHER" id="PTHR46811">
    <property type="entry name" value="COILED-COIL-HELIX-COILED-COIL-HELIX DOMAIN-CONTAINING PROTEIN 7"/>
    <property type="match status" value="1"/>
</dbReference>
<dbReference type="PANTHER" id="PTHR46811:SF1">
    <property type="entry name" value="COILED-COIL-HELIX-COILED-COIL-HELIX DOMAIN-CONTAINING PROTEIN 7"/>
    <property type="match status" value="1"/>
</dbReference>
<dbReference type="Pfam" id="PF06747">
    <property type="entry name" value="CHCH"/>
    <property type="match status" value="1"/>
</dbReference>
<dbReference type="SUPFAM" id="SSF47072">
    <property type="entry name" value="Cysteine alpha-hairpin motif"/>
    <property type="match status" value="1"/>
</dbReference>
<dbReference type="PROSITE" id="PS51808">
    <property type="entry name" value="CHCH"/>
    <property type="match status" value="1"/>
</dbReference>
<proteinExistence type="inferred from homology"/>
<name>COX23_EREGS</name>
<comment type="function">
    <text evidence="2">Required for the assembly of cytochrome c oxidase.</text>
</comment>
<comment type="subcellular location">
    <subcellularLocation>
        <location evidence="1">Mitochondrion intermembrane space</location>
    </subcellularLocation>
</comment>
<comment type="similarity">
    <text evidence="6">Belongs to the COX23 family.</text>
</comment>
<accession>Q75D94</accession>
<keyword id="KW-1015">Disulfide bond</keyword>
<keyword id="KW-0496">Mitochondrion</keyword>
<keyword id="KW-1185">Reference proteome</keyword>
<keyword id="KW-0809">Transit peptide</keyword>
<evidence type="ECO:0000250" key="1"/>
<evidence type="ECO:0000250" key="2">
    <source>
        <dbReference type="UniProtKB" id="P38824"/>
    </source>
</evidence>
<evidence type="ECO:0000255" key="3"/>
<evidence type="ECO:0000255" key="4">
    <source>
        <dbReference type="PROSITE-ProRule" id="PRU01150"/>
    </source>
</evidence>
<evidence type="ECO:0000256" key="5">
    <source>
        <dbReference type="SAM" id="MobiDB-lite"/>
    </source>
</evidence>
<evidence type="ECO:0000305" key="6"/>
<gene>
    <name type="primary">COX23</name>
    <name type="ordered locus">ABR130W</name>
</gene>
<reference key="1">
    <citation type="journal article" date="2004" name="Science">
        <title>The Ashbya gossypii genome as a tool for mapping the ancient Saccharomyces cerevisiae genome.</title>
        <authorList>
            <person name="Dietrich F.S."/>
            <person name="Voegeli S."/>
            <person name="Brachat S."/>
            <person name="Lerch A."/>
            <person name="Gates K."/>
            <person name="Steiner S."/>
            <person name="Mohr C."/>
            <person name="Poehlmann R."/>
            <person name="Luedi P."/>
            <person name="Choi S."/>
            <person name="Wing R.A."/>
            <person name="Flavier A."/>
            <person name="Gaffney T.D."/>
            <person name="Philippsen P."/>
        </authorList>
    </citation>
    <scope>NUCLEOTIDE SEQUENCE [LARGE SCALE GENOMIC DNA]</scope>
    <source>
        <strain>ATCC 10895 / CBS 109.51 / FGSC 9923 / NRRL Y-1056</strain>
    </source>
</reference>
<reference key="2">
    <citation type="journal article" date="2013" name="G3 (Bethesda)">
        <title>Genomes of Ashbya fungi isolated from insects reveal four mating-type loci, numerous translocations, lack of transposons, and distinct gene duplications.</title>
        <authorList>
            <person name="Dietrich F.S."/>
            <person name="Voegeli S."/>
            <person name="Kuo S."/>
            <person name="Philippsen P."/>
        </authorList>
    </citation>
    <scope>GENOME REANNOTATION</scope>
    <scope>SEQUENCE REVISION TO 43; 52 AND 61</scope>
    <source>
        <strain>ATCC 10895 / CBS 109.51 / FGSC 9923 / NRRL Y-1056</strain>
    </source>
</reference>
<feature type="transit peptide" description="Mitochondrion" evidence="3">
    <location>
        <begin position="1"/>
        <end status="unknown"/>
    </location>
</feature>
<feature type="chain" id="PRO_0000280655" description="Cytochrome c oxidase-assembly factor COX23, mitochondrial">
    <location>
        <begin status="unknown"/>
        <end position="111"/>
    </location>
</feature>
<feature type="domain" description="CHCH" evidence="4">
    <location>
        <begin position="61"/>
        <end position="103"/>
    </location>
</feature>
<feature type="region of interest" description="Disordered" evidence="5">
    <location>
        <begin position="1"/>
        <end position="21"/>
    </location>
</feature>
<feature type="short sequence motif" description="Cx9C motif 1" evidence="4">
    <location>
        <begin position="64"/>
        <end position="74"/>
    </location>
</feature>
<feature type="short sequence motif" description="Cx9C motif 2" evidence="4">
    <location>
        <begin position="85"/>
        <end position="95"/>
    </location>
</feature>
<feature type="compositionally biased region" description="Polar residues" evidence="5">
    <location>
        <begin position="7"/>
        <end position="20"/>
    </location>
</feature>
<feature type="disulfide bond" evidence="4">
    <location>
        <begin position="64"/>
        <end position="95"/>
    </location>
</feature>
<feature type="disulfide bond" evidence="4">
    <location>
        <begin position="74"/>
        <end position="85"/>
    </location>
</feature>
<protein>
    <recommendedName>
        <fullName>Cytochrome c oxidase-assembly factor COX23, mitochondrial</fullName>
    </recommendedName>
</protein>
<organism>
    <name type="scientific">Eremothecium gossypii (strain ATCC 10895 / CBS 109.51 / FGSC 9923 / NRRL Y-1056)</name>
    <name type="common">Yeast</name>
    <name type="synonym">Ashbya gossypii</name>
    <dbReference type="NCBI Taxonomy" id="284811"/>
    <lineage>
        <taxon>Eukaryota</taxon>
        <taxon>Fungi</taxon>
        <taxon>Dikarya</taxon>
        <taxon>Ascomycota</taxon>
        <taxon>Saccharomycotina</taxon>
        <taxon>Saccharomycetes</taxon>
        <taxon>Saccharomycetales</taxon>
        <taxon>Saccharomycetaceae</taxon>
        <taxon>Eremothecium</taxon>
    </lineage>
</organism>
<sequence>MPVDTAAPQSTANPDPSVQTDRAAVNFTPSTDASSFQFYPDNPESPLARYRFAAKGPSQYFDPCQESANMSMKCLERNNYDRDLCREYFDAYRECKKQWLSARRKDNSQWT</sequence>